<sequence length="548" mass="59485">MALHVPKAPGFAQMLKEGAKHYSGLEEAVYRNIQACKELAQTTRTAYGPNGMNKMVINHLEKLFVTNDAATILRELEVQHPAAKMLVMASHMQEQEVGDGTNFVLVFAGVLLELAEDLLRMGLSVSEVIEGYEKACKKALEILPDLVCCSAKNLRDVDEVASLLHTSVMSKQYGNESFLSKLIAQACVSILPDSGHFNVDNIRVCKIVGAGVSASSVLHGMVFNKETEGDVTSVKDAKXAVYSCPFDGMITETKGTVLIKNAEELMNFSKGEENLMDLQVKAIADSGANVVVTGGKVADMALHYANKYNLMIVRLNSKWDLRRLCKTVGATALPRLTPPTLEEMGHCNSVYLSEVGDTQVVVFKHEKEDGAISTILIRGSTDNLMDDIERAVDDGVNTFKVLTRDKRLVPGGGATEIELAKQITSYGETCPGLDQYAIKKFAEAFEAIPRALAENSGVKANEVISKLYAVHQEGNKNVGFDIEAEAAAVKDMLEAGILDTYLGKYWGIKLATNAAVTVLRVDQIIMAKPAGGPKPPSGKKDWDEDQND</sequence>
<dbReference type="EC" id="3.6.1.-" evidence="3"/>
<dbReference type="EMBL" id="AY393846">
    <property type="protein sequence ID" value="AAS49611.1"/>
    <property type="molecule type" value="mRNA"/>
</dbReference>
<dbReference type="RefSeq" id="NP_001004389.2">
    <property type="nucleotide sequence ID" value="NM_001004389.2"/>
</dbReference>
<dbReference type="BioGRID" id="679712">
    <property type="interactions" value="1"/>
</dbReference>
<dbReference type="FunCoup" id="Q6EE31">
    <property type="interactions" value="2979"/>
</dbReference>
<dbReference type="STRING" id="9031.ENSGALP00000058407"/>
<dbReference type="PaxDb" id="9031-ENSGALP00000025461"/>
<dbReference type="GeneID" id="418486"/>
<dbReference type="KEGG" id="gga:418486"/>
<dbReference type="CTD" id="10694"/>
<dbReference type="VEuPathDB" id="HostDB:geneid_418486"/>
<dbReference type="eggNOG" id="KOG0362">
    <property type="taxonomic scope" value="Eukaryota"/>
</dbReference>
<dbReference type="InParanoid" id="Q6EE31"/>
<dbReference type="OrthoDB" id="1748577at2759"/>
<dbReference type="PhylomeDB" id="Q6EE31"/>
<dbReference type="PRO" id="PR:Q6EE31"/>
<dbReference type="Proteomes" id="UP000000539">
    <property type="component" value="Unassembled WGS sequence"/>
</dbReference>
<dbReference type="GO" id="GO:0042995">
    <property type="term" value="C:cell projection"/>
    <property type="evidence" value="ECO:0007669"/>
    <property type="project" value="UniProtKB-KW"/>
</dbReference>
<dbReference type="GO" id="GO:0005813">
    <property type="term" value="C:centrosome"/>
    <property type="evidence" value="ECO:0007669"/>
    <property type="project" value="UniProtKB-SubCell"/>
</dbReference>
<dbReference type="GO" id="GO:0005832">
    <property type="term" value="C:chaperonin-containing T-complex"/>
    <property type="evidence" value="ECO:0000318"/>
    <property type="project" value="GO_Central"/>
</dbReference>
<dbReference type="GO" id="GO:0005524">
    <property type="term" value="F:ATP binding"/>
    <property type="evidence" value="ECO:0007669"/>
    <property type="project" value="UniProtKB-KW"/>
</dbReference>
<dbReference type="GO" id="GO:0016887">
    <property type="term" value="F:ATP hydrolysis activity"/>
    <property type="evidence" value="ECO:0007669"/>
    <property type="project" value="InterPro"/>
</dbReference>
<dbReference type="GO" id="GO:0140662">
    <property type="term" value="F:ATP-dependent protein folding chaperone"/>
    <property type="evidence" value="ECO:0007669"/>
    <property type="project" value="InterPro"/>
</dbReference>
<dbReference type="GO" id="GO:0051082">
    <property type="term" value="F:unfolded protein binding"/>
    <property type="evidence" value="ECO:0000318"/>
    <property type="project" value="GO_Central"/>
</dbReference>
<dbReference type="GO" id="GO:0006457">
    <property type="term" value="P:protein folding"/>
    <property type="evidence" value="ECO:0000318"/>
    <property type="project" value="GO_Central"/>
</dbReference>
<dbReference type="CDD" id="cd03341">
    <property type="entry name" value="TCP1_theta"/>
    <property type="match status" value="1"/>
</dbReference>
<dbReference type="FunFam" id="3.50.7.10:FF:000008">
    <property type="entry name" value="T-complex protein 1 subunit theta"/>
    <property type="match status" value="1"/>
</dbReference>
<dbReference type="Gene3D" id="3.50.7.10">
    <property type="entry name" value="GroEL"/>
    <property type="match status" value="1"/>
</dbReference>
<dbReference type="Gene3D" id="1.10.560.10">
    <property type="entry name" value="GroEL-like equatorial domain"/>
    <property type="match status" value="1"/>
</dbReference>
<dbReference type="Gene3D" id="3.30.260.10">
    <property type="entry name" value="TCP-1-like chaperonin intermediate domain"/>
    <property type="match status" value="1"/>
</dbReference>
<dbReference type="InterPro" id="IPR012721">
    <property type="entry name" value="Chap_CCT_theta"/>
</dbReference>
<dbReference type="InterPro" id="IPR017998">
    <property type="entry name" value="Chaperone_TCP-1"/>
</dbReference>
<dbReference type="InterPro" id="IPR002194">
    <property type="entry name" value="Chaperonin_TCP-1_CS"/>
</dbReference>
<dbReference type="InterPro" id="IPR002423">
    <property type="entry name" value="Cpn60/GroEL/TCP-1"/>
</dbReference>
<dbReference type="InterPro" id="IPR027409">
    <property type="entry name" value="GroEL-like_apical_dom_sf"/>
</dbReference>
<dbReference type="InterPro" id="IPR027413">
    <property type="entry name" value="GROEL-like_equatorial_sf"/>
</dbReference>
<dbReference type="InterPro" id="IPR027410">
    <property type="entry name" value="TCP-1-like_intermed_sf"/>
</dbReference>
<dbReference type="NCBIfam" id="TIGR02346">
    <property type="entry name" value="chap_CCT_theta"/>
    <property type="match status" value="1"/>
</dbReference>
<dbReference type="PANTHER" id="PTHR11353">
    <property type="entry name" value="CHAPERONIN"/>
    <property type="match status" value="1"/>
</dbReference>
<dbReference type="Pfam" id="PF00118">
    <property type="entry name" value="Cpn60_TCP1"/>
    <property type="match status" value="1"/>
</dbReference>
<dbReference type="PRINTS" id="PR00304">
    <property type="entry name" value="TCOMPLEXTCP1"/>
</dbReference>
<dbReference type="SUPFAM" id="SSF52029">
    <property type="entry name" value="GroEL apical domain-like"/>
    <property type="match status" value="1"/>
</dbReference>
<dbReference type="SUPFAM" id="SSF48592">
    <property type="entry name" value="GroEL equatorial domain-like"/>
    <property type="match status" value="1"/>
</dbReference>
<dbReference type="SUPFAM" id="SSF54849">
    <property type="entry name" value="GroEL-intermediate domain like"/>
    <property type="match status" value="1"/>
</dbReference>
<dbReference type="PROSITE" id="PS00750">
    <property type="entry name" value="TCP1_1"/>
    <property type="match status" value="1"/>
</dbReference>
<dbReference type="PROSITE" id="PS00751">
    <property type="entry name" value="TCP1_2"/>
    <property type="match status" value="1"/>
</dbReference>
<dbReference type="PROSITE" id="PS00995">
    <property type="entry name" value="TCP1_3"/>
    <property type="match status" value="1"/>
</dbReference>
<proteinExistence type="evidence at protein level"/>
<feature type="initiator methionine" description="Removed" evidence="6">
    <location>
        <position position="1"/>
    </location>
</feature>
<feature type="chain" id="PRO_0000223485" description="T-complex protein 1 subunit theta">
    <location>
        <begin position="2"/>
        <end position="548"/>
    </location>
</feature>
<feature type="region of interest" description="Disordered" evidence="5">
    <location>
        <begin position="529"/>
        <end position="548"/>
    </location>
</feature>
<feature type="binding site" evidence="3">
    <location>
        <position position="47"/>
    </location>
    <ligand>
        <name>ADP</name>
        <dbReference type="ChEBI" id="CHEBI:456216"/>
    </ligand>
</feature>
<feature type="binding site" evidence="3">
    <location>
        <position position="48"/>
    </location>
    <ligand>
        <name>ADP</name>
        <dbReference type="ChEBI" id="CHEBI:456216"/>
    </ligand>
</feature>
<feature type="binding site" evidence="3">
    <location>
        <position position="99"/>
    </location>
    <ligand>
        <name>Mg(2+)</name>
        <dbReference type="ChEBI" id="CHEBI:18420"/>
    </ligand>
</feature>
<feature type="binding site" evidence="3">
    <location>
        <position position="100"/>
    </location>
    <ligand>
        <name>ADP</name>
        <dbReference type="ChEBI" id="CHEBI:456216"/>
    </ligand>
</feature>
<feature type="binding site" evidence="3">
    <location>
        <position position="100"/>
    </location>
    <ligand>
        <name>ATP</name>
        <dbReference type="ChEBI" id="CHEBI:30616"/>
    </ligand>
</feature>
<feature type="binding site" evidence="3">
    <location>
        <position position="101"/>
    </location>
    <ligand>
        <name>ADP</name>
        <dbReference type="ChEBI" id="CHEBI:456216"/>
    </ligand>
</feature>
<feature type="binding site" evidence="3">
    <location>
        <position position="101"/>
    </location>
    <ligand>
        <name>ATP</name>
        <dbReference type="ChEBI" id="CHEBI:30616"/>
    </ligand>
</feature>
<feature type="binding site" evidence="3">
    <location>
        <position position="102"/>
    </location>
    <ligand>
        <name>ADP</name>
        <dbReference type="ChEBI" id="CHEBI:456216"/>
    </ligand>
</feature>
<feature type="binding site" evidence="3">
    <location>
        <position position="102"/>
    </location>
    <ligand>
        <name>ATP</name>
        <dbReference type="ChEBI" id="CHEBI:30616"/>
    </ligand>
</feature>
<feature type="binding site" evidence="3">
    <location>
        <position position="103"/>
    </location>
    <ligand>
        <name>ADP</name>
        <dbReference type="ChEBI" id="CHEBI:456216"/>
    </ligand>
</feature>
<feature type="binding site" evidence="3">
    <location>
        <position position="169"/>
    </location>
    <ligand>
        <name>ADP</name>
        <dbReference type="ChEBI" id="CHEBI:456216"/>
    </ligand>
</feature>
<feature type="binding site" evidence="3">
    <location>
        <position position="170"/>
    </location>
    <ligand>
        <name>ADP</name>
        <dbReference type="ChEBI" id="CHEBI:456216"/>
    </ligand>
</feature>
<feature type="binding site" evidence="3">
    <location>
        <position position="170"/>
    </location>
    <ligand>
        <name>ATP</name>
        <dbReference type="ChEBI" id="CHEBI:30616"/>
    </ligand>
</feature>
<feature type="binding site" evidence="3">
    <location>
        <position position="171"/>
    </location>
    <ligand>
        <name>ADP</name>
        <dbReference type="ChEBI" id="CHEBI:456216"/>
    </ligand>
</feature>
<feature type="binding site" evidence="3">
    <location>
        <position position="171"/>
    </location>
    <ligand>
        <name>ATP</name>
        <dbReference type="ChEBI" id="CHEBI:30616"/>
    </ligand>
</feature>
<feature type="binding site" evidence="3">
    <location>
        <position position="412"/>
    </location>
    <ligand>
        <name>ADP</name>
        <dbReference type="ChEBI" id="CHEBI:456216"/>
    </ligand>
</feature>
<feature type="binding site" evidence="3">
    <location>
        <position position="412"/>
    </location>
    <ligand>
        <name>ATP</name>
        <dbReference type="ChEBI" id="CHEBI:30616"/>
    </ligand>
</feature>
<feature type="binding site" evidence="3">
    <location>
        <position position="499"/>
    </location>
    <ligand>
        <name>ADP</name>
        <dbReference type="ChEBI" id="CHEBI:456216"/>
    </ligand>
</feature>
<feature type="binding site" evidence="3">
    <location>
        <position position="499"/>
    </location>
    <ligand>
        <name>ATP</name>
        <dbReference type="ChEBI" id="CHEBI:30616"/>
    </ligand>
</feature>
<feature type="binding site" evidence="3">
    <location>
        <position position="504"/>
    </location>
    <ligand>
        <name>ATP</name>
        <dbReference type="ChEBI" id="CHEBI:30616"/>
    </ligand>
</feature>
<feature type="modified residue" description="N-acetylalanine" evidence="1">
    <location>
        <position position="2"/>
    </location>
</feature>
<feature type="modified residue" description="Phosphotyrosine" evidence="1">
    <location>
        <position position="505"/>
    </location>
</feature>
<reference evidence="8" key="1">
    <citation type="journal article" date="2004" name="Mol. Biol. Evol.">
        <title>The phylogenetic relationship of tetrapod, coelacanth, and lungfish revealed by the sequences of forty-four nuclear genes.</title>
        <authorList>
            <person name="Takezaki N."/>
            <person name="Figueroa F."/>
            <person name="Zaleska-Rutczynska Z."/>
            <person name="Takahata N."/>
            <person name="Klein J."/>
        </authorList>
    </citation>
    <scope>NUCLEOTIDE SEQUENCE [MRNA]</scope>
    <source>
        <tissue evidence="8">Liver</tissue>
    </source>
</reference>
<reference evidence="7" key="2">
    <citation type="journal article" date="2005" name="Proteomics">
        <title>Proteomic analysis of the Gallus gallus embryo at stage-29 of development.</title>
        <authorList>
            <person name="Agudo D."/>
            <person name="Gomez-Esquer F."/>
            <person name="Diaz-Gil G."/>
            <person name="Martinez-Arribas F."/>
            <person name="Delcan J."/>
            <person name="Schneider J."/>
            <person name="Palomar M.A."/>
            <person name="Linares R."/>
        </authorList>
    </citation>
    <scope>IDENTIFICATION</scope>
    <scope>MASS SPECTROMETRY</scope>
    <source>
        <tissue evidence="6">Embryo</tissue>
    </source>
</reference>
<accession>Q6EE31</accession>
<name>TCPQ_CHICK</name>
<protein>
    <recommendedName>
        <fullName>T-complex protein 1 subunit theta</fullName>
        <shortName>TCP-1-theta</shortName>
        <ecNumber evidence="3">3.6.1.-</ecNumber>
    </recommendedName>
    <alternativeName>
        <fullName>CCT-theta</fullName>
    </alternativeName>
</protein>
<organism>
    <name type="scientific">Gallus gallus</name>
    <name type="common">Chicken</name>
    <dbReference type="NCBI Taxonomy" id="9031"/>
    <lineage>
        <taxon>Eukaryota</taxon>
        <taxon>Metazoa</taxon>
        <taxon>Chordata</taxon>
        <taxon>Craniata</taxon>
        <taxon>Vertebrata</taxon>
        <taxon>Euteleostomi</taxon>
        <taxon>Archelosauria</taxon>
        <taxon>Archosauria</taxon>
        <taxon>Dinosauria</taxon>
        <taxon>Saurischia</taxon>
        <taxon>Theropoda</taxon>
        <taxon>Coelurosauria</taxon>
        <taxon>Aves</taxon>
        <taxon>Neognathae</taxon>
        <taxon>Galloanserae</taxon>
        <taxon>Galliformes</taxon>
        <taxon>Phasianidae</taxon>
        <taxon>Phasianinae</taxon>
        <taxon>Gallus</taxon>
    </lineage>
</organism>
<gene>
    <name evidence="3" type="primary">CCT8</name>
</gene>
<evidence type="ECO:0000250" key="1"/>
<evidence type="ECO:0000250" key="2">
    <source>
        <dbReference type="UniProtKB" id="P42932"/>
    </source>
</evidence>
<evidence type="ECO:0000250" key="3">
    <source>
        <dbReference type="UniProtKB" id="P50990"/>
    </source>
</evidence>
<evidence type="ECO:0000255" key="4"/>
<evidence type="ECO:0000256" key="5">
    <source>
        <dbReference type="SAM" id="MobiDB-lite"/>
    </source>
</evidence>
<evidence type="ECO:0000269" key="6">
    <source>
    </source>
</evidence>
<evidence type="ECO:0000305" key="7"/>
<evidence type="ECO:0000312" key="8">
    <source>
        <dbReference type="EMBL" id="AAS49611.1"/>
    </source>
</evidence>
<comment type="function">
    <text evidence="3">Component of the chaperonin-containing T-complex (TRiC), a molecular chaperone complex that assists the folding of actin, tubulin and other proteins upon ATP hydrolysis.</text>
</comment>
<comment type="catalytic activity">
    <reaction evidence="3">
        <text>ATP + H2O = ADP + phosphate + H(+)</text>
        <dbReference type="Rhea" id="RHEA:13065"/>
        <dbReference type="ChEBI" id="CHEBI:15377"/>
        <dbReference type="ChEBI" id="CHEBI:15378"/>
        <dbReference type="ChEBI" id="CHEBI:30616"/>
        <dbReference type="ChEBI" id="CHEBI:43474"/>
        <dbReference type="ChEBI" id="CHEBI:456216"/>
    </reaction>
</comment>
<comment type="subunit">
    <text evidence="3">Component of the chaperonin-containing T-complex (TRiC), a hexadecamer composed of two identical back-to-back stacked rings enclosing a protein folding chamber. Each ring is made up of eight different subunits: TCP1/CCT1, CCT2, CCT3, CCT4, CCT5, CCT6A/CCT6, CCT7, CCT8.</text>
</comment>
<comment type="subcellular location">
    <subcellularLocation>
        <location evidence="3">Cytoplasm</location>
    </subcellularLocation>
    <subcellularLocation>
        <location evidence="3">Cytoplasm</location>
        <location evidence="3">Cytoskeleton</location>
        <location evidence="3">Microtubule organizing center</location>
        <location evidence="3">Centrosome</location>
    </subcellularLocation>
    <subcellularLocation>
        <location evidence="2">Cytoplasm</location>
        <location evidence="2">Cytoskeleton</location>
        <location evidence="2">Cilium basal body</location>
    </subcellularLocation>
</comment>
<comment type="mass spectrometry" mass="60153.0" error="4.0" method="MALDI" evidence="6"/>
<comment type="similarity">
    <text evidence="4">Belongs to the TCP-1 chaperonin family.</text>
</comment>
<keyword id="KW-0007">Acetylation</keyword>
<keyword id="KW-0067">ATP-binding</keyword>
<keyword id="KW-0966">Cell projection</keyword>
<keyword id="KW-0143">Chaperone</keyword>
<keyword id="KW-0963">Cytoplasm</keyword>
<keyword id="KW-0206">Cytoskeleton</keyword>
<keyword id="KW-0378">Hydrolase</keyword>
<keyword id="KW-0460">Magnesium</keyword>
<keyword id="KW-0479">Metal-binding</keyword>
<keyword id="KW-0547">Nucleotide-binding</keyword>
<keyword id="KW-0597">Phosphoprotein</keyword>
<keyword id="KW-1185">Reference proteome</keyword>